<comment type="function">
    <text evidence="5 6 8 10">Chemotactic-signal transducers respond to changes in the concentration of attractants and repellents in the environment, transduce a signal from the outside to the inside of the cell, and facilitate sensory adaptation through the variation of the level of methylation. Responds to L-His, L-Pro and gamma-aminobutyrate (GABA). Also involved in repellent responses to trichloroethylene (TCE), chloroform and methylthiocyanate (PubMed:16233808, PubMed:23650915, PubMed:9353923). Also mediates chemotaxis to histamine, but does not bind histamine (PubMed:30425146).</text>
</comment>
<comment type="subcellular location">
    <subcellularLocation>
        <location evidence="11">Cell inner membrane</location>
        <topology evidence="1">Multi-pass membrane protein</topology>
    </subcellularLocation>
</comment>
<comment type="domain">
    <text evidence="6 9">The ligand binding region binds directly to 2 L-amino acids (PubMed:23650915). Binding of GABA induces structural changes of the chemoreceptor (PubMed:31964737).</text>
</comment>
<comment type="disruption phenotype">
    <text evidence="5 7 8 10">Mutant shows no defect in chemotaxis toward L-amino acids. Mutant also shows decreased chemotactic responses to TCE, chloroform and methylthiocyanate (PubMed:16233808, PubMed:9353923). Deletion of pctA, pctB and pctC abolishes chemotaxis to 5 mM histamine, but significant chemotaxis is observed at a concentration range between 500 nM and 500 uM (PubMed:30425146). The pctABC-tlpQ deletion mutant is devoid of histamine chemotaxis over the entire concentration range (50 nM to 50 mM) (PubMed:30425146). The deletion mutant does not show significant reduction in swarming or immobilization near epithelial wounds, but the pctABC triple deletion mutant shows a significant reduction in chemotaxis and immobilization along wounds of human cystic fibrosis airway epithelial cells (PubMed:27031335).</text>
</comment>
<comment type="miscellaneous">
    <text evidence="12">PctA has a broad ligand range and responds to most of the proteinogenic amino acids, whereas PctB and PctC have a much narrower range and show strong ligand preference for L-glutamine and gamma-aminobutyrate, respectively. These receptors are paralogs: pctA gene duplication in the common ancestor of the genus Pseudomonas led to pctC, whereas pctB originated through another, independent pctA duplication.</text>
</comment>
<comment type="similarity">
    <text evidence="11">Belongs to the methyl-accepting chemotaxis (MCP) protein family.</text>
</comment>
<reference key="1">
    <citation type="journal article" date="1997" name="Microbiology">
        <title>Genetic identification of chemotactic transducers for amino acids in Pseudomonas aeruginosa.</title>
        <authorList>
            <person name="Taguchi K."/>
            <person name="Fukutomi H."/>
            <person name="Kuroda A."/>
            <person name="Kato J."/>
            <person name="Ohtake H."/>
        </authorList>
    </citation>
    <scope>NUCLEOTIDE SEQUENCE [GENOMIC DNA]</scope>
    <scope>FUNCTION</scope>
    <scope>DISRUPTION PHENOTYPE</scope>
    <source>
        <strain>ATCC 15692 / DSM 22644 / CIP 104116 / JCM 14847 / LMG 12228 / 1C / PRS 101 / PAO1</strain>
    </source>
</reference>
<reference key="2">
    <citation type="journal article" date="2000" name="Nature">
        <title>Complete genome sequence of Pseudomonas aeruginosa PAO1, an opportunistic pathogen.</title>
        <authorList>
            <person name="Stover C.K."/>
            <person name="Pham X.-Q.T."/>
            <person name="Erwin A.L."/>
            <person name="Mizoguchi S.D."/>
            <person name="Warrener P."/>
            <person name="Hickey M.J."/>
            <person name="Brinkman F.S.L."/>
            <person name="Hufnagle W.O."/>
            <person name="Kowalik D.J."/>
            <person name="Lagrou M."/>
            <person name="Garber R.L."/>
            <person name="Goltry L."/>
            <person name="Tolentino E."/>
            <person name="Westbrock-Wadman S."/>
            <person name="Yuan Y."/>
            <person name="Brody L.L."/>
            <person name="Coulter S.N."/>
            <person name="Folger K.R."/>
            <person name="Kas A."/>
            <person name="Larbig K."/>
            <person name="Lim R.M."/>
            <person name="Smith K.A."/>
            <person name="Spencer D.H."/>
            <person name="Wong G.K.-S."/>
            <person name="Wu Z."/>
            <person name="Paulsen I.T."/>
            <person name="Reizer J."/>
            <person name="Saier M.H. Jr."/>
            <person name="Hancock R.E.W."/>
            <person name="Lory S."/>
            <person name="Olson M.V."/>
        </authorList>
    </citation>
    <scope>NUCLEOTIDE SEQUENCE [LARGE SCALE GENOMIC DNA]</scope>
    <source>
        <strain>ATCC 15692 / DSM 22644 / CIP 104116 / JCM 14847 / LMG 12228 / 1C / PRS 101 / PAO1</strain>
    </source>
</reference>
<reference key="3">
    <citation type="journal article" date="2005" name="J. Biosci. Bioeng.">
        <title>Identification of chemosensory proteins for trichloroethylene in Pseudomonas aeruginosa.</title>
        <authorList>
            <person name="Shitashiro M."/>
            <person name="Tanaka H."/>
            <person name="Hong C.S."/>
            <person name="Kuroda A."/>
            <person name="Takiguchi N."/>
            <person name="Ohtake H."/>
            <person name="Kato J."/>
        </authorList>
    </citation>
    <scope>FUNCTION IN REPELLENT RESPONSES</scope>
    <scope>DISRUPTION PHENOTYPE</scope>
    <source>
        <strain>ATCC 15692 / DSM 22644 / CIP 104116 / JCM 14847 / LMG 12228 / 1C / PRS 101 / PAO1</strain>
    </source>
</reference>
<reference key="4">
    <citation type="journal article" date="2013" name="Mol. Microbiol.">
        <title>Paralogous chemoreceptors mediate chemotaxis towards protein amino acids and the non-protein amino acid gamma-aminobutyrate (GABA).</title>
        <authorList>
            <person name="Rico-Jimenez M."/>
            <person name="Munoz-Martinez F."/>
            <person name="Garcia-Fontana C."/>
            <person name="Fernandez M."/>
            <person name="Morel B."/>
            <person name="Ortega A."/>
            <person name="Ramos J.L."/>
            <person name="Krell T."/>
        </authorList>
    </citation>
    <scope>FUNCTION</scope>
    <scope>DOMAIN</scope>
    <source>
        <strain>ATCC 15692 / DSM 22644 / CIP 104116 / JCM 14847 / LMG 12228 / 1C / PRS 101 / PAO1</strain>
    </source>
</reference>
<reference key="5">
    <citation type="journal article" date="2016" name="PLoS ONE">
        <title>Chemotaxis and binding of Pseudomonas aeruginosa to scratch-wounded human cystic fibrosis airway epithelial cells.</title>
        <authorList>
            <person name="Schwarzer C."/>
            <person name="Fischer H."/>
            <person name="Machen T.E."/>
        </authorList>
    </citation>
    <scope>DISRUPTION PHENOTYPE</scope>
    <source>
        <strain>ATCC 15692 / DSM 22644 / CIP 104116 / JCM 14847 / LMG 12228 / 1C / PRS 101 / PAO1</strain>
    </source>
</reference>
<reference key="6">
    <citation type="journal article" date="2018" name="MBio">
        <title>High-affinity chemotaxis to histamine mediated by the TlpQ chemoreceptor of the human pathogen Pseudomonas aeruginosa.</title>
        <authorList>
            <person name="Corral-Lugo A."/>
            <person name="Matilla M.A."/>
            <person name="Martin-Mora D."/>
            <person name="Silva Jimenez H."/>
            <person name="Mesa Torres N."/>
            <person name="Kato J."/>
            <person name="Hida A."/>
            <person name="Oku S."/>
            <person name="Conejero-Muriel M."/>
            <person name="Gavira J.A."/>
            <person name="Krell T."/>
        </authorList>
    </citation>
    <scope>FUNCTION</scope>
    <scope>DISRUPTION PHENOTYPE</scope>
    <source>
        <strain>ATCC 15692 / DSM 22644 / CIP 104116 / JCM 14847 / LMG 12228 / 1C / PRS 101 / PAO1</strain>
    </source>
</reference>
<reference evidence="13" key="7">
    <citation type="journal article" date="2020" name="MBio">
        <title>How bacterial chemoreceptors evolve novel ligand specificities.</title>
        <authorList>
            <person name="Gavira J.A."/>
            <person name="Gumerov V.M."/>
            <person name="Rico-Jimenez M."/>
            <person name="Petukh M."/>
            <person name="Upadhyay A.A."/>
            <person name="Ortega A."/>
            <person name="Matilla M.A."/>
            <person name="Zhulin I.B."/>
            <person name="Krell T."/>
        </authorList>
    </citation>
    <scope>X-RAY CRYSTALLOGRAPHY (2.31 ANGSTROMS) OF 30-281 IN COMPLEX WITH GABA</scope>
    <scope>DOMAIN</scope>
    <scope>MOLECULAR EVOLUTION</scope>
    <source>
        <strain>ATCC 15692 / DSM 22644 / CIP 104116 / JCM 14847 / LMG 12228 / 1C / PRS 101 / PAO1</strain>
    </source>
</reference>
<name>PCTC_PSEAE</name>
<gene>
    <name type="primary">pctC</name>
    <name type="ordered locus">PA4307</name>
</gene>
<sequence>MLRSLSFAKKILLAAALVVVFAFSCFILYNDYRQREAVRTDTENYLGEIGTLTASNIQSWLEGRMHLVEGLASQLALLDQPDEANIARQLEQPVFSRNFASVYLGEAASGTFTMRPYDAMPEGYDPRTRAWYKDALAADRLIVTEPFVDAGTGEQILAMSLPVRHAGQLLGVAAGDMKLETLTAILNSLKFDGAGYAFLVSDAGKILLHPDSGLVLKTLAEAYPKGAPNIVPGVHEVELDGSSQFVSFTPVKGLPGVTWYVALVLDRDTAYSMLSEFRTSAIVATLIAVVGIMLLLGMLIRVLMQPLTDMGRAMQDIAQGEGDLTKRLKVTSNDEFGTLANAFNRFVERIHESIREVAGTARQLHDVAQLVVNASNSSMANSDEQSNRTNSVAAAINELGAAAQEIARNAADASHHASDANHQAEDGKQVVEQTIRAMNELSEKISASCANIEALNSRTVNIGQILEVIKGISEQTNLLALNAAIEAARAGEAGRGFAVVADEVRNLAHRAQESAQQIQKMIEELQVGAREAVATMTESQRYSLESVEIANRAGERLGSVTSRIGEIDSMNQSVATATEEQTAVVDSLNMDITEINTLNQEGVENLQATLRACGELETQAGRLRHLVDSFKI</sequence>
<dbReference type="EMBL" id="D86947">
    <property type="protein sequence ID" value="BAA23410.1"/>
    <property type="molecule type" value="Genomic_DNA"/>
</dbReference>
<dbReference type="EMBL" id="AE004091">
    <property type="protein sequence ID" value="AAG07695.1"/>
    <property type="molecule type" value="Genomic_DNA"/>
</dbReference>
<dbReference type="PIR" id="H83106">
    <property type="entry name" value="H83106"/>
</dbReference>
<dbReference type="RefSeq" id="NP_252997.1">
    <property type="nucleotide sequence ID" value="NC_002516.2"/>
</dbReference>
<dbReference type="RefSeq" id="WP_003148124.1">
    <property type="nucleotide sequence ID" value="NZ_JASSSF010000027.1"/>
</dbReference>
<dbReference type="PDB" id="5LTV">
    <property type="method" value="X-ray"/>
    <property type="resolution" value="2.31 A"/>
    <property type="chains" value="A/B/C/D/E/F/G=30-281"/>
</dbReference>
<dbReference type="PDBsum" id="5LTV"/>
<dbReference type="SMR" id="Q9HW93"/>
<dbReference type="FunCoup" id="Q9HW93">
    <property type="interactions" value="197"/>
</dbReference>
<dbReference type="STRING" id="208964.PA4307"/>
<dbReference type="PaxDb" id="208964-PA4307"/>
<dbReference type="GeneID" id="881576"/>
<dbReference type="KEGG" id="pae:PA4307"/>
<dbReference type="PATRIC" id="fig|208964.12.peg.4510"/>
<dbReference type="PseudoCAP" id="PA4307"/>
<dbReference type="HOGENOM" id="CLU_000445_107_19_6"/>
<dbReference type="InParanoid" id="Q9HW93"/>
<dbReference type="OrthoDB" id="7021108at2"/>
<dbReference type="PhylomeDB" id="Q9HW93"/>
<dbReference type="BioCyc" id="PAER208964:G1FZ6-4391-MONOMER"/>
<dbReference type="Proteomes" id="UP000002438">
    <property type="component" value="Chromosome"/>
</dbReference>
<dbReference type="GO" id="GO:0005886">
    <property type="term" value="C:plasma membrane"/>
    <property type="evidence" value="ECO:0007669"/>
    <property type="project" value="UniProtKB-SubCell"/>
</dbReference>
<dbReference type="GO" id="GO:0016597">
    <property type="term" value="F:amino acid binding"/>
    <property type="evidence" value="ECO:0000314"/>
    <property type="project" value="PseudoCAP"/>
</dbReference>
<dbReference type="GO" id="GO:0006935">
    <property type="term" value="P:chemotaxis"/>
    <property type="evidence" value="ECO:0000315"/>
    <property type="project" value="PseudoCAP"/>
</dbReference>
<dbReference type="GO" id="GO:0043200">
    <property type="term" value="P:response to amino acid"/>
    <property type="evidence" value="ECO:0000315"/>
    <property type="project" value="PseudoCAP"/>
</dbReference>
<dbReference type="GO" id="GO:0007165">
    <property type="term" value="P:signal transduction"/>
    <property type="evidence" value="ECO:0007669"/>
    <property type="project" value="UniProtKB-KW"/>
</dbReference>
<dbReference type="CDD" id="cd06225">
    <property type="entry name" value="HAMP"/>
    <property type="match status" value="1"/>
</dbReference>
<dbReference type="CDD" id="cd11386">
    <property type="entry name" value="MCP_signal"/>
    <property type="match status" value="1"/>
</dbReference>
<dbReference type="CDD" id="cd12913">
    <property type="entry name" value="PDC1_MCP_like"/>
    <property type="match status" value="1"/>
</dbReference>
<dbReference type="CDD" id="cd12912">
    <property type="entry name" value="PDC2_MCP_like"/>
    <property type="match status" value="1"/>
</dbReference>
<dbReference type="FunFam" id="3.30.450.20:FF:000048">
    <property type="entry name" value="Methyl-accepting chemotaxis protein"/>
    <property type="match status" value="1"/>
</dbReference>
<dbReference type="FunFam" id="1.10.287.950:FF:000001">
    <property type="entry name" value="Methyl-accepting chemotaxis sensory transducer"/>
    <property type="match status" value="1"/>
</dbReference>
<dbReference type="Gene3D" id="1.10.287.950">
    <property type="entry name" value="Methyl-accepting chemotaxis protein"/>
    <property type="match status" value="1"/>
</dbReference>
<dbReference type="Gene3D" id="3.30.450.20">
    <property type="entry name" value="PAS domain"/>
    <property type="match status" value="2"/>
</dbReference>
<dbReference type="InterPro" id="IPR033479">
    <property type="entry name" value="dCache_1"/>
</dbReference>
<dbReference type="InterPro" id="IPR003660">
    <property type="entry name" value="HAMP_dom"/>
</dbReference>
<dbReference type="InterPro" id="IPR004089">
    <property type="entry name" value="MCPsignal_dom"/>
</dbReference>
<dbReference type="InterPro" id="IPR029151">
    <property type="entry name" value="Sensor-like_sf"/>
</dbReference>
<dbReference type="InterPro" id="IPR000727">
    <property type="entry name" value="T_SNARE_dom"/>
</dbReference>
<dbReference type="PANTHER" id="PTHR32089:SF39">
    <property type="entry name" value="METHYL-ACCEPTING CHEMOTAXIS PROTEIN HLYB"/>
    <property type="match status" value="1"/>
</dbReference>
<dbReference type="PANTHER" id="PTHR32089">
    <property type="entry name" value="METHYL-ACCEPTING CHEMOTAXIS PROTEIN MCPB"/>
    <property type="match status" value="1"/>
</dbReference>
<dbReference type="Pfam" id="PF02743">
    <property type="entry name" value="dCache_1"/>
    <property type="match status" value="1"/>
</dbReference>
<dbReference type="Pfam" id="PF00672">
    <property type="entry name" value="HAMP"/>
    <property type="match status" value="1"/>
</dbReference>
<dbReference type="Pfam" id="PF00015">
    <property type="entry name" value="MCPsignal"/>
    <property type="match status" value="1"/>
</dbReference>
<dbReference type="SMART" id="SM00304">
    <property type="entry name" value="HAMP"/>
    <property type="match status" value="2"/>
</dbReference>
<dbReference type="SMART" id="SM00283">
    <property type="entry name" value="MA"/>
    <property type="match status" value="1"/>
</dbReference>
<dbReference type="SUPFAM" id="SSF58104">
    <property type="entry name" value="Methyl-accepting chemotaxis protein (MCP) signaling domain"/>
    <property type="match status" value="1"/>
</dbReference>
<dbReference type="SUPFAM" id="SSF103190">
    <property type="entry name" value="Sensory domain-like"/>
    <property type="match status" value="1"/>
</dbReference>
<dbReference type="PROSITE" id="PS50111">
    <property type="entry name" value="CHEMOTAXIS_TRANSDUC_2"/>
    <property type="match status" value="1"/>
</dbReference>
<dbReference type="PROSITE" id="PS50885">
    <property type="entry name" value="HAMP"/>
    <property type="match status" value="1"/>
</dbReference>
<proteinExistence type="evidence at protein level"/>
<organism>
    <name type="scientific">Pseudomonas aeruginosa (strain ATCC 15692 / DSM 22644 / CIP 104116 / JCM 14847 / LMG 12228 / 1C / PRS 101 / PAO1)</name>
    <dbReference type="NCBI Taxonomy" id="208964"/>
    <lineage>
        <taxon>Bacteria</taxon>
        <taxon>Pseudomonadati</taxon>
        <taxon>Pseudomonadota</taxon>
        <taxon>Gammaproteobacteria</taxon>
        <taxon>Pseudomonadales</taxon>
        <taxon>Pseudomonadaceae</taxon>
        <taxon>Pseudomonas</taxon>
    </lineage>
</organism>
<evidence type="ECO:0000255" key="1"/>
<evidence type="ECO:0000255" key="2">
    <source>
        <dbReference type="PROSITE-ProRule" id="PRU00102"/>
    </source>
</evidence>
<evidence type="ECO:0000255" key="3">
    <source>
        <dbReference type="PROSITE-ProRule" id="PRU00284"/>
    </source>
</evidence>
<evidence type="ECO:0000256" key="4">
    <source>
        <dbReference type="SAM" id="MobiDB-lite"/>
    </source>
</evidence>
<evidence type="ECO:0000269" key="5">
    <source>
    </source>
</evidence>
<evidence type="ECO:0000269" key="6">
    <source>
    </source>
</evidence>
<evidence type="ECO:0000269" key="7">
    <source>
    </source>
</evidence>
<evidence type="ECO:0000269" key="8">
    <source>
    </source>
</evidence>
<evidence type="ECO:0000269" key="9">
    <source>
    </source>
</evidence>
<evidence type="ECO:0000269" key="10">
    <source>
    </source>
</evidence>
<evidence type="ECO:0000305" key="11"/>
<evidence type="ECO:0000305" key="12">
    <source>
    </source>
</evidence>
<evidence type="ECO:0007744" key="13">
    <source>
        <dbReference type="PDB" id="5LTV"/>
    </source>
</evidence>
<evidence type="ECO:0007829" key="14">
    <source>
        <dbReference type="PDB" id="5LTV"/>
    </source>
</evidence>
<accession>Q9HW93</accession>
<accession>O32440</accession>
<keyword id="KW-0002">3D-structure</keyword>
<keyword id="KW-0997">Cell inner membrane</keyword>
<keyword id="KW-1003">Cell membrane</keyword>
<keyword id="KW-0145">Chemotaxis</keyword>
<keyword id="KW-0472">Membrane</keyword>
<keyword id="KW-0488">Methylation</keyword>
<keyword id="KW-1185">Reference proteome</keyword>
<keyword id="KW-0807">Transducer</keyword>
<keyword id="KW-0812">Transmembrane</keyword>
<keyword id="KW-1133">Transmembrane helix</keyword>
<protein>
    <recommendedName>
        <fullName>Methyl-accepting chemotaxis protein PctC</fullName>
    </recommendedName>
</protein>
<feature type="chain" id="PRO_0000424851" description="Methyl-accepting chemotaxis protein PctC">
    <location>
        <begin position="1"/>
        <end position="632"/>
    </location>
</feature>
<feature type="topological domain" description="Cytoplasmic" evidence="1">
    <location>
        <begin position="1"/>
        <end position="10"/>
    </location>
</feature>
<feature type="transmembrane region" description="Helical" evidence="1">
    <location>
        <begin position="11"/>
        <end position="31"/>
    </location>
</feature>
<feature type="topological domain" description="Periplasmic" evidence="1">
    <location>
        <begin position="32"/>
        <end position="279"/>
    </location>
</feature>
<feature type="transmembrane region" description="Helical" evidence="1">
    <location>
        <begin position="280"/>
        <end position="300"/>
    </location>
</feature>
<feature type="topological domain" description="Cytoplasmic" evidence="1">
    <location>
        <begin position="301"/>
        <end position="632"/>
    </location>
</feature>
<feature type="domain" description="Cache" evidence="1">
    <location>
        <begin position="37"/>
        <end position="262"/>
    </location>
</feature>
<feature type="domain" description="HAMP" evidence="2">
    <location>
        <begin position="301"/>
        <end position="355"/>
    </location>
</feature>
<feature type="domain" description="Methyl-accepting transducer" evidence="3">
    <location>
        <begin position="360"/>
        <end position="596"/>
    </location>
</feature>
<feature type="region of interest" description="Disordered" evidence="4">
    <location>
        <begin position="408"/>
        <end position="427"/>
    </location>
</feature>
<feature type="compositionally biased region" description="Basic and acidic residues" evidence="4">
    <location>
        <begin position="413"/>
        <end position="427"/>
    </location>
</feature>
<feature type="binding site" evidence="9">
    <location>
        <position position="124"/>
    </location>
    <ligand>
        <name>4-aminobutanoate</name>
        <dbReference type="ChEBI" id="CHEBI:59888"/>
    </ligand>
</feature>
<feature type="binding site" evidence="9">
    <location>
        <begin position="129"/>
        <end position="131"/>
    </location>
    <ligand>
        <name>4-aminobutanoate</name>
        <dbReference type="ChEBI" id="CHEBI:59888"/>
    </ligand>
</feature>
<feature type="binding site" evidence="9">
    <location>
        <position position="150"/>
    </location>
    <ligand>
        <name>4-aminobutanoate</name>
        <dbReference type="ChEBI" id="CHEBI:59888"/>
    </ligand>
</feature>
<feature type="binding site" evidence="9">
    <location>
        <position position="176"/>
    </location>
    <ligand>
        <name>4-aminobutanoate</name>
        <dbReference type="ChEBI" id="CHEBI:59888"/>
    </ligand>
</feature>
<feature type="sequence conflict" description="In Ref. 1; BAA23410." evidence="11" ref="1">
    <original>DM</original>
    <variation>EW</variation>
    <location>
        <begin position="176"/>
        <end position="177"/>
    </location>
</feature>
<feature type="sequence conflict" description="In Ref. 1; BAA23410." evidence="11" ref="1">
    <original>A</original>
    <variation>D</variation>
    <location>
        <position position="490"/>
    </location>
</feature>
<feature type="sequence conflict" description="In Ref. 1; BAA23410." evidence="11" ref="1">
    <original>S</original>
    <variation>C</variation>
    <location>
        <position position="573"/>
    </location>
</feature>
<feature type="helix" evidence="14">
    <location>
        <begin position="42"/>
        <end position="76"/>
    </location>
</feature>
<feature type="helix" evidence="14">
    <location>
        <begin position="83"/>
        <end position="90"/>
    </location>
</feature>
<feature type="helix" evidence="14">
    <location>
        <begin position="93"/>
        <end position="98"/>
    </location>
</feature>
<feature type="strand" evidence="14">
    <location>
        <begin position="100"/>
        <end position="106"/>
    </location>
</feature>
<feature type="turn" evidence="14">
    <location>
        <begin position="107"/>
        <end position="109"/>
    </location>
</feature>
<feature type="strand" evidence="14">
    <location>
        <begin position="112"/>
        <end position="116"/>
    </location>
</feature>
<feature type="helix" evidence="14">
    <location>
        <begin position="126"/>
        <end position="128"/>
    </location>
</feature>
<feature type="helix" evidence="14">
    <location>
        <begin position="130"/>
        <end position="138"/>
    </location>
</feature>
<feature type="turn" evidence="14">
    <location>
        <begin position="150"/>
        <end position="152"/>
    </location>
</feature>
<feature type="strand" evidence="14">
    <location>
        <begin position="155"/>
        <end position="165"/>
    </location>
</feature>
<feature type="strand" evidence="14">
    <location>
        <begin position="168"/>
        <end position="178"/>
    </location>
</feature>
<feature type="helix" evidence="14">
    <location>
        <begin position="179"/>
        <end position="186"/>
    </location>
</feature>
<feature type="helix" evidence="14">
    <location>
        <begin position="191"/>
        <end position="193"/>
    </location>
</feature>
<feature type="strand" evidence="14">
    <location>
        <begin position="196"/>
        <end position="201"/>
    </location>
</feature>
<feature type="strand" evidence="14">
    <location>
        <begin position="204"/>
        <end position="208"/>
    </location>
</feature>
<feature type="helix" evidence="14">
    <location>
        <begin position="212"/>
        <end position="214"/>
    </location>
</feature>
<feature type="helix" evidence="14">
    <location>
        <begin position="219"/>
        <end position="222"/>
    </location>
</feature>
<feature type="strand" evidence="14">
    <location>
        <begin position="232"/>
        <end position="238"/>
    </location>
</feature>
<feature type="strand" evidence="14">
    <location>
        <begin position="244"/>
        <end position="250"/>
    </location>
</feature>
<feature type="strand" evidence="14">
    <location>
        <begin position="259"/>
        <end position="265"/>
    </location>
</feature>